<evidence type="ECO:0000250" key="1"/>
<evidence type="ECO:0000255" key="2">
    <source>
        <dbReference type="PROSITE-ProRule" id="PRU00808"/>
    </source>
</evidence>
<evidence type="ECO:0000269" key="3">
    <source>
    </source>
</evidence>
<organism>
    <name type="scientific">Schizosaccharomyces pombe (strain 972 / ATCC 24843)</name>
    <name type="common">Fission yeast</name>
    <dbReference type="NCBI Taxonomy" id="284812"/>
    <lineage>
        <taxon>Eukaryota</taxon>
        <taxon>Fungi</taxon>
        <taxon>Dikarya</taxon>
        <taxon>Ascomycota</taxon>
        <taxon>Taphrinomycotina</taxon>
        <taxon>Schizosaccharomycetes</taxon>
        <taxon>Schizosaccharomycetales</taxon>
        <taxon>Schizosaccharomycetaceae</taxon>
        <taxon>Schizosaccharomyces</taxon>
    </lineage>
</organism>
<keyword id="KW-0963">Cytoplasm</keyword>
<keyword id="KW-0539">Nucleus</keyword>
<keyword id="KW-0647">Proteasome</keyword>
<keyword id="KW-1185">Reference proteome</keyword>
<name>PSA2_SCHPO</name>
<dbReference type="EMBL" id="CU329672">
    <property type="protein sequence ID" value="CAA21440.1"/>
    <property type="molecule type" value="Genomic_DNA"/>
</dbReference>
<dbReference type="PIR" id="T40971">
    <property type="entry name" value="T40971"/>
</dbReference>
<dbReference type="RefSeq" id="NP_588320.1">
    <property type="nucleotide sequence ID" value="NM_001023311.2"/>
</dbReference>
<dbReference type="SMR" id="O94579"/>
<dbReference type="BioGRID" id="275599">
    <property type="interactions" value="13"/>
</dbReference>
<dbReference type="ComplexPortal" id="CPX-9077">
    <property type="entry name" value="26S proteasome complex"/>
</dbReference>
<dbReference type="FunCoup" id="O94579">
    <property type="interactions" value="476"/>
</dbReference>
<dbReference type="STRING" id="284812.O94579"/>
<dbReference type="MEROPS" id="T01.A11"/>
<dbReference type="iPTMnet" id="O94579"/>
<dbReference type="PaxDb" id="4896-SPCC1442.06.1"/>
<dbReference type="EnsemblFungi" id="SPCC1442.06.1">
    <property type="protein sequence ID" value="SPCC1442.06.1:pep"/>
    <property type="gene ID" value="SPCC1442.06"/>
</dbReference>
<dbReference type="GeneID" id="2539026"/>
<dbReference type="KEGG" id="spo:2539026"/>
<dbReference type="PomBase" id="SPCC1442.06">
    <property type="gene designation" value="pre8"/>
</dbReference>
<dbReference type="VEuPathDB" id="FungiDB:SPCC1442.06"/>
<dbReference type="eggNOG" id="KOG0181">
    <property type="taxonomic scope" value="Eukaryota"/>
</dbReference>
<dbReference type="HOGENOM" id="CLU_035750_4_1_1"/>
<dbReference type="InParanoid" id="O94579"/>
<dbReference type="OMA" id="ATCIGKD"/>
<dbReference type="PhylomeDB" id="O94579"/>
<dbReference type="Reactome" id="R-SPO-1236978">
    <property type="pathway name" value="Cross-presentation of soluble exogenous antigens (endosomes)"/>
</dbReference>
<dbReference type="Reactome" id="R-SPO-350562">
    <property type="pathway name" value="Regulation of ornithine decarboxylase (ODC)"/>
</dbReference>
<dbReference type="Reactome" id="R-SPO-5687128">
    <property type="pathway name" value="MAPK6/MAPK4 signaling"/>
</dbReference>
<dbReference type="Reactome" id="R-SPO-5689603">
    <property type="pathway name" value="UCH proteinases"/>
</dbReference>
<dbReference type="Reactome" id="R-SPO-5689880">
    <property type="pathway name" value="Ub-specific processing proteases"/>
</dbReference>
<dbReference type="Reactome" id="R-SPO-6798695">
    <property type="pathway name" value="Neutrophil degranulation"/>
</dbReference>
<dbReference type="Reactome" id="R-SPO-68949">
    <property type="pathway name" value="Orc1 removal from chromatin"/>
</dbReference>
<dbReference type="Reactome" id="R-SPO-69017">
    <property type="pathway name" value="CDK-mediated phosphorylation and removal of Cdc6"/>
</dbReference>
<dbReference type="Reactome" id="R-SPO-69601">
    <property type="pathway name" value="Ubiquitin Mediated Degradation of Phosphorylated Cdc25A"/>
</dbReference>
<dbReference type="Reactome" id="R-SPO-75815">
    <property type="pathway name" value="Ubiquitin-dependent degradation of Cyclin D"/>
</dbReference>
<dbReference type="Reactome" id="R-SPO-8854050">
    <property type="pathway name" value="FBXL7 down-regulates AURKA during mitotic entry and in early mitosis"/>
</dbReference>
<dbReference type="Reactome" id="R-SPO-8948751">
    <property type="pathway name" value="Regulation of PTEN stability and activity"/>
</dbReference>
<dbReference type="Reactome" id="R-SPO-8951664">
    <property type="pathway name" value="Neddylation"/>
</dbReference>
<dbReference type="Reactome" id="R-SPO-9755511">
    <property type="pathway name" value="KEAP1-NFE2L2 pathway"/>
</dbReference>
<dbReference type="Reactome" id="R-SPO-983168">
    <property type="pathway name" value="Antigen processing: Ubiquitination &amp; Proteasome degradation"/>
</dbReference>
<dbReference type="Reactome" id="R-SPO-9907900">
    <property type="pathway name" value="Proteasome assembly"/>
</dbReference>
<dbReference type="PRO" id="PR:O94579"/>
<dbReference type="Proteomes" id="UP000002485">
    <property type="component" value="Chromosome III"/>
</dbReference>
<dbReference type="GO" id="GO:0005829">
    <property type="term" value="C:cytosol"/>
    <property type="evidence" value="ECO:0007005"/>
    <property type="project" value="PomBase"/>
</dbReference>
<dbReference type="GO" id="GO:0005634">
    <property type="term" value="C:nucleus"/>
    <property type="evidence" value="ECO:0007005"/>
    <property type="project" value="PomBase"/>
</dbReference>
<dbReference type="GO" id="GO:0019773">
    <property type="term" value="C:proteasome core complex, alpha-subunit complex"/>
    <property type="evidence" value="ECO:0000314"/>
    <property type="project" value="PomBase"/>
</dbReference>
<dbReference type="GO" id="GO:0043161">
    <property type="term" value="P:proteasome-mediated ubiquitin-dependent protein catabolic process"/>
    <property type="evidence" value="ECO:0000318"/>
    <property type="project" value="GO_Central"/>
</dbReference>
<dbReference type="CDD" id="cd03750">
    <property type="entry name" value="proteasome_alpha_type_2"/>
    <property type="match status" value="1"/>
</dbReference>
<dbReference type="FunFam" id="3.60.20.10:FF:000028">
    <property type="entry name" value="Proteasome subunit alpha type"/>
    <property type="match status" value="1"/>
</dbReference>
<dbReference type="Gene3D" id="3.60.20.10">
    <property type="entry name" value="Glutamine Phosphoribosylpyrophosphate, subunit 1, domain 1"/>
    <property type="match status" value="1"/>
</dbReference>
<dbReference type="InterPro" id="IPR029055">
    <property type="entry name" value="Ntn_hydrolases_N"/>
</dbReference>
<dbReference type="InterPro" id="IPR050115">
    <property type="entry name" value="Proteasome_alpha"/>
</dbReference>
<dbReference type="InterPro" id="IPR023332">
    <property type="entry name" value="Proteasome_alpha-type"/>
</dbReference>
<dbReference type="InterPro" id="IPR000426">
    <property type="entry name" value="Proteasome_asu_N"/>
</dbReference>
<dbReference type="InterPro" id="IPR001353">
    <property type="entry name" value="Proteasome_sua/b"/>
</dbReference>
<dbReference type="NCBIfam" id="NF003075">
    <property type="entry name" value="PRK03996.1"/>
    <property type="match status" value="1"/>
</dbReference>
<dbReference type="PANTHER" id="PTHR11599">
    <property type="entry name" value="PROTEASOME SUBUNIT ALPHA/BETA"/>
    <property type="match status" value="1"/>
</dbReference>
<dbReference type="Pfam" id="PF00227">
    <property type="entry name" value="Proteasome"/>
    <property type="match status" value="1"/>
</dbReference>
<dbReference type="Pfam" id="PF10584">
    <property type="entry name" value="Proteasome_A_N"/>
    <property type="match status" value="1"/>
</dbReference>
<dbReference type="SMART" id="SM00948">
    <property type="entry name" value="Proteasome_A_N"/>
    <property type="match status" value="1"/>
</dbReference>
<dbReference type="SUPFAM" id="SSF56235">
    <property type="entry name" value="N-terminal nucleophile aminohydrolases (Ntn hydrolases)"/>
    <property type="match status" value="1"/>
</dbReference>
<dbReference type="PROSITE" id="PS00388">
    <property type="entry name" value="PROTEASOME_ALPHA_1"/>
    <property type="match status" value="1"/>
</dbReference>
<dbReference type="PROSITE" id="PS51475">
    <property type="entry name" value="PROTEASOME_ALPHA_2"/>
    <property type="match status" value="1"/>
</dbReference>
<accession>O94579</accession>
<sequence>MTDKYAFSLTTFSPNGKLVQIEYALNAVNAGVTSVGIKATDGVVLATEKKPTSELAIGASLEKVCAITPDIGMVYSGMGPDFRVLVDKSRKVAQTTYKKIYNEYPPTKILVQEIASVMQESTQSGGVRPFGVSLLVAGMDEKGPSLYQVDPSGTYFAWKATAIGKSSTAAKTFLEKRYNDELELDDAVHTAILALKETFEGELTEDNIEIAVVSTKPTDSGIVGVPGGHFCRLSQSEIRDYLDQV</sequence>
<protein>
    <recommendedName>
        <fullName>Probable proteasome subunit alpha type-2</fullName>
    </recommendedName>
</protein>
<gene>
    <name type="primary">pre8</name>
    <name type="ORF">SPCC1442.06</name>
</gene>
<comment type="function">
    <text evidence="1">The proteasome is a multicatalytic proteinase complex which is characterized by its ability to cleave peptides with Arg, Phe, Tyr, Leu, and Glu adjacent to the leaving group at neutral or slightly basic pH. The proteasome has an ATP-dependent proteolytic activity (By similarity).</text>
</comment>
<comment type="subunit">
    <text evidence="1">The 26S proteasome consists of a 20S proteasome core and two 19S regulatory subunits. The 20S proteasome core is composed of 28 subunits that are arranged in four stacked rings, resulting in a barrel-shaped structure. The two end rings are each formed by seven alpha subunits, and the two central rings are each formed by seven beta subunits. The catalytic chamber with the active sites is on the inside of the barrel (By similarity).</text>
</comment>
<comment type="subcellular location">
    <subcellularLocation>
        <location evidence="3">Cytoplasm</location>
    </subcellularLocation>
    <subcellularLocation>
        <location evidence="3">Nucleus</location>
    </subcellularLocation>
</comment>
<comment type="similarity">
    <text evidence="2">Belongs to the peptidase T1A family.</text>
</comment>
<feature type="chain" id="PRO_0000124089" description="Probable proteasome subunit alpha type-2">
    <location>
        <begin position="1"/>
        <end position="245"/>
    </location>
</feature>
<proteinExistence type="inferred from homology"/>
<reference key="1">
    <citation type="journal article" date="2002" name="Nature">
        <title>The genome sequence of Schizosaccharomyces pombe.</title>
        <authorList>
            <person name="Wood V."/>
            <person name="Gwilliam R."/>
            <person name="Rajandream M.A."/>
            <person name="Lyne M.H."/>
            <person name="Lyne R."/>
            <person name="Stewart A."/>
            <person name="Sgouros J.G."/>
            <person name="Peat N."/>
            <person name="Hayles J."/>
            <person name="Baker S.G."/>
            <person name="Basham D."/>
            <person name="Bowman S."/>
            <person name="Brooks K."/>
            <person name="Brown D."/>
            <person name="Brown S."/>
            <person name="Chillingworth T."/>
            <person name="Churcher C.M."/>
            <person name="Collins M."/>
            <person name="Connor R."/>
            <person name="Cronin A."/>
            <person name="Davis P."/>
            <person name="Feltwell T."/>
            <person name="Fraser A."/>
            <person name="Gentles S."/>
            <person name="Goble A."/>
            <person name="Hamlin N."/>
            <person name="Harris D.E."/>
            <person name="Hidalgo J."/>
            <person name="Hodgson G."/>
            <person name="Holroyd S."/>
            <person name="Hornsby T."/>
            <person name="Howarth S."/>
            <person name="Huckle E.J."/>
            <person name="Hunt S."/>
            <person name="Jagels K."/>
            <person name="James K.D."/>
            <person name="Jones L."/>
            <person name="Jones M."/>
            <person name="Leather S."/>
            <person name="McDonald S."/>
            <person name="McLean J."/>
            <person name="Mooney P."/>
            <person name="Moule S."/>
            <person name="Mungall K.L."/>
            <person name="Murphy L.D."/>
            <person name="Niblett D."/>
            <person name="Odell C."/>
            <person name="Oliver K."/>
            <person name="O'Neil S."/>
            <person name="Pearson D."/>
            <person name="Quail M.A."/>
            <person name="Rabbinowitsch E."/>
            <person name="Rutherford K.M."/>
            <person name="Rutter S."/>
            <person name="Saunders D."/>
            <person name="Seeger K."/>
            <person name="Sharp S."/>
            <person name="Skelton J."/>
            <person name="Simmonds M.N."/>
            <person name="Squares R."/>
            <person name="Squares S."/>
            <person name="Stevens K."/>
            <person name="Taylor K."/>
            <person name="Taylor R.G."/>
            <person name="Tivey A."/>
            <person name="Walsh S.V."/>
            <person name="Warren T."/>
            <person name="Whitehead S."/>
            <person name="Woodward J.R."/>
            <person name="Volckaert G."/>
            <person name="Aert R."/>
            <person name="Robben J."/>
            <person name="Grymonprez B."/>
            <person name="Weltjens I."/>
            <person name="Vanstreels E."/>
            <person name="Rieger M."/>
            <person name="Schaefer M."/>
            <person name="Mueller-Auer S."/>
            <person name="Gabel C."/>
            <person name="Fuchs M."/>
            <person name="Duesterhoeft A."/>
            <person name="Fritzc C."/>
            <person name="Holzer E."/>
            <person name="Moestl D."/>
            <person name="Hilbert H."/>
            <person name="Borzym K."/>
            <person name="Langer I."/>
            <person name="Beck A."/>
            <person name="Lehrach H."/>
            <person name="Reinhardt R."/>
            <person name="Pohl T.M."/>
            <person name="Eger P."/>
            <person name="Zimmermann W."/>
            <person name="Wedler H."/>
            <person name="Wambutt R."/>
            <person name="Purnelle B."/>
            <person name="Goffeau A."/>
            <person name="Cadieu E."/>
            <person name="Dreano S."/>
            <person name="Gloux S."/>
            <person name="Lelaure V."/>
            <person name="Mottier S."/>
            <person name="Galibert F."/>
            <person name="Aves S.J."/>
            <person name="Xiang Z."/>
            <person name="Hunt C."/>
            <person name="Moore K."/>
            <person name="Hurst S.M."/>
            <person name="Lucas M."/>
            <person name="Rochet M."/>
            <person name="Gaillardin C."/>
            <person name="Tallada V.A."/>
            <person name="Garzon A."/>
            <person name="Thode G."/>
            <person name="Daga R.R."/>
            <person name="Cruzado L."/>
            <person name="Jimenez J."/>
            <person name="Sanchez M."/>
            <person name="del Rey F."/>
            <person name="Benito J."/>
            <person name="Dominguez A."/>
            <person name="Revuelta J.L."/>
            <person name="Moreno S."/>
            <person name="Armstrong J."/>
            <person name="Forsburg S.L."/>
            <person name="Cerutti L."/>
            <person name="Lowe T."/>
            <person name="McCombie W.R."/>
            <person name="Paulsen I."/>
            <person name="Potashkin J."/>
            <person name="Shpakovski G.V."/>
            <person name="Ussery D."/>
            <person name="Barrell B.G."/>
            <person name="Nurse P."/>
        </authorList>
    </citation>
    <scope>NUCLEOTIDE SEQUENCE [LARGE SCALE GENOMIC DNA]</scope>
    <source>
        <strain>972 / ATCC 24843</strain>
    </source>
</reference>
<reference key="2">
    <citation type="journal article" date="2006" name="Nat. Biotechnol.">
        <title>ORFeome cloning and global analysis of protein localization in the fission yeast Schizosaccharomyces pombe.</title>
        <authorList>
            <person name="Matsuyama A."/>
            <person name="Arai R."/>
            <person name="Yashiroda Y."/>
            <person name="Shirai A."/>
            <person name="Kamata A."/>
            <person name="Sekido S."/>
            <person name="Kobayashi Y."/>
            <person name="Hashimoto A."/>
            <person name="Hamamoto M."/>
            <person name="Hiraoka Y."/>
            <person name="Horinouchi S."/>
            <person name="Yoshida M."/>
        </authorList>
    </citation>
    <scope>SUBCELLULAR LOCATION [LARGE SCALE ANALYSIS]</scope>
</reference>